<reference key="1">
    <citation type="submission" date="2008-10" db="EMBL/GenBank/DDBJ databases">
        <title>The complete genome sequence of Helicobacter pylori strain P12.</title>
        <authorList>
            <person name="Fischer W."/>
            <person name="Windhager L."/>
            <person name="Karnholz A."/>
            <person name="Zeiller M."/>
            <person name="Zimmer R."/>
            <person name="Haas R."/>
        </authorList>
    </citation>
    <scope>NUCLEOTIDE SEQUENCE [LARGE SCALE GENOMIC DNA]</scope>
    <source>
        <strain>P12</strain>
    </source>
</reference>
<feature type="chain" id="PRO_1000090532" description="Crossover junction endodeoxyribonuclease RuvC">
    <location>
        <begin position="1"/>
        <end position="157"/>
    </location>
</feature>
<feature type="active site" evidence="1">
    <location>
        <position position="7"/>
    </location>
</feature>
<feature type="active site" evidence="1">
    <location>
        <position position="66"/>
    </location>
</feature>
<feature type="active site" evidence="1">
    <location>
        <position position="139"/>
    </location>
</feature>
<feature type="binding site" evidence="1">
    <location>
        <position position="7"/>
    </location>
    <ligand>
        <name>Mg(2+)</name>
        <dbReference type="ChEBI" id="CHEBI:18420"/>
        <label>1</label>
    </ligand>
</feature>
<feature type="binding site" evidence="1">
    <location>
        <position position="66"/>
    </location>
    <ligand>
        <name>Mg(2+)</name>
        <dbReference type="ChEBI" id="CHEBI:18420"/>
        <label>2</label>
    </ligand>
</feature>
<feature type="binding site" evidence="1">
    <location>
        <position position="139"/>
    </location>
    <ligand>
        <name>Mg(2+)</name>
        <dbReference type="ChEBI" id="CHEBI:18420"/>
        <label>1</label>
    </ligand>
</feature>
<keyword id="KW-0963">Cytoplasm</keyword>
<keyword id="KW-0227">DNA damage</keyword>
<keyword id="KW-0233">DNA recombination</keyword>
<keyword id="KW-0234">DNA repair</keyword>
<keyword id="KW-0238">DNA-binding</keyword>
<keyword id="KW-0255">Endonuclease</keyword>
<keyword id="KW-0378">Hydrolase</keyword>
<keyword id="KW-0460">Magnesium</keyword>
<keyword id="KW-0479">Metal-binding</keyword>
<keyword id="KW-0540">Nuclease</keyword>
<proteinExistence type="inferred from homology"/>
<organism>
    <name type="scientific">Helicobacter pylori (strain P12)</name>
    <dbReference type="NCBI Taxonomy" id="570508"/>
    <lineage>
        <taxon>Bacteria</taxon>
        <taxon>Pseudomonadati</taxon>
        <taxon>Campylobacterota</taxon>
        <taxon>Epsilonproteobacteria</taxon>
        <taxon>Campylobacterales</taxon>
        <taxon>Helicobacteraceae</taxon>
        <taxon>Helicobacter</taxon>
    </lineage>
</organism>
<comment type="function">
    <text evidence="1">The RuvA-RuvB-RuvC complex processes Holliday junction (HJ) DNA during genetic recombination and DNA repair. Endonuclease that resolves HJ intermediates. Cleaves cruciform DNA by making single-stranded nicks across the HJ at symmetrical positions within the homologous arms, yielding a 5'-phosphate and a 3'-hydroxyl group; requires a central core of homology in the junction. The consensus cleavage sequence is 5'-(A/T)TT(C/G)-3'. Cleavage occurs on the 3'-side of the TT dinucleotide at the point of strand exchange. HJ branch migration catalyzed by RuvA-RuvB allows RuvC to scan DNA until it finds its consensus sequence, where it cleaves and resolves the cruciform DNA.</text>
</comment>
<comment type="catalytic activity">
    <reaction evidence="1">
        <text>Endonucleolytic cleavage at a junction such as a reciprocal single-stranded crossover between two homologous DNA duplexes (Holliday junction).</text>
        <dbReference type="EC" id="3.1.21.10"/>
    </reaction>
</comment>
<comment type="cofactor">
    <cofactor evidence="1">
        <name>Mg(2+)</name>
        <dbReference type="ChEBI" id="CHEBI:18420"/>
    </cofactor>
    <text evidence="1">Binds 2 Mg(2+) ion per subunit.</text>
</comment>
<comment type="subunit">
    <text evidence="1">Homodimer which binds Holliday junction (HJ) DNA. The HJ becomes 2-fold symmetrical on binding to RuvC with unstacked arms; it has a different conformation from HJ DNA in complex with RuvA. In the full resolvosome a probable DNA-RuvA(4)-RuvB(12)-RuvC(2) complex forms which resolves the HJ.</text>
</comment>
<comment type="subcellular location">
    <subcellularLocation>
        <location evidence="1">Cytoplasm</location>
    </subcellularLocation>
</comment>
<comment type="similarity">
    <text evidence="1">Belongs to the RuvC family.</text>
</comment>
<dbReference type="EC" id="3.1.21.10" evidence="1"/>
<dbReference type="EMBL" id="CP001217">
    <property type="protein sequence ID" value="ACJ08029.1"/>
    <property type="molecule type" value="Genomic_DNA"/>
</dbReference>
<dbReference type="SMR" id="B6JMA1"/>
<dbReference type="KEGG" id="hpp:HPP12_0877"/>
<dbReference type="HOGENOM" id="CLU_091257_3_0_7"/>
<dbReference type="Proteomes" id="UP000008198">
    <property type="component" value="Chromosome"/>
</dbReference>
<dbReference type="GO" id="GO:0005737">
    <property type="term" value="C:cytoplasm"/>
    <property type="evidence" value="ECO:0007669"/>
    <property type="project" value="UniProtKB-SubCell"/>
</dbReference>
<dbReference type="GO" id="GO:0048476">
    <property type="term" value="C:Holliday junction resolvase complex"/>
    <property type="evidence" value="ECO:0007669"/>
    <property type="project" value="UniProtKB-UniRule"/>
</dbReference>
<dbReference type="GO" id="GO:0008821">
    <property type="term" value="F:crossover junction DNA endonuclease activity"/>
    <property type="evidence" value="ECO:0007669"/>
    <property type="project" value="UniProtKB-UniRule"/>
</dbReference>
<dbReference type="GO" id="GO:0003677">
    <property type="term" value="F:DNA binding"/>
    <property type="evidence" value="ECO:0007669"/>
    <property type="project" value="UniProtKB-KW"/>
</dbReference>
<dbReference type="GO" id="GO:0000287">
    <property type="term" value="F:magnesium ion binding"/>
    <property type="evidence" value="ECO:0007669"/>
    <property type="project" value="UniProtKB-UniRule"/>
</dbReference>
<dbReference type="GO" id="GO:0006310">
    <property type="term" value="P:DNA recombination"/>
    <property type="evidence" value="ECO:0007669"/>
    <property type="project" value="UniProtKB-UniRule"/>
</dbReference>
<dbReference type="GO" id="GO:0006281">
    <property type="term" value="P:DNA repair"/>
    <property type="evidence" value="ECO:0007669"/>
    <property type="project" value="UniProtKB-UniRule"/>
</dbReference>
<dbReference type="CDD" id="cd16962">
    <property type="entry name" value="RuvC"/>
    <property type="match status" value="1"/>
</dbReference>
<dbReference type="FunFam" id="3.30.420.10:FF:000002">
    <property type="entry name" value="Crossover junction endodeoxyribonuclease RuvC"/>
    <property type="match status" value="1"/>
</dbReference>
<dbReference type="Gene3D" id="3.30.420.10">
    <property type="entry name" value="Ribonuclease H-like superfamily/Ribonuclease H"/>
    <property type="match status" value="1"/>
</dbReference>
<dbReference type="HAMAP" id="MF_00034">
    <property type="entry name" value="RuvC"/>
    <property type="match status" value="1"/>
</dbReference>
<dbReference type="InterPro" id="IPR012337">
    <property type="entry name" value="RNaseH-like_sf"/>
</dbReference>
<dbReference type="InterPro" id="IPR036397">
    <property type="entry name" value="RNaseH_sf"/>
</dbReference>
<dbReference type="InterPro" id="IPR020563">
    <property type="entry name" value="X-over_junc_endoDNase_Mg_BS"/>
</dbReference>
<dbReference type="InterPro" id="IPR002176">
    <property type="entry name" value="X-over_junc_endoDNase_RuvC"/>
</dbReference>
<dbReference type="NCBIfam" id="TIGR00228">
    <property type="entry name" value="ruvC"/>
    <property type="match status" value="1"/>
</dbReference>
<dbReference type="PANTHER" id="PTHR30194">
    <property type="entry name" value="CROSSOVER JUNCTION ENDODEOXYRIBONUCLEASE RUVC"/>
    <property type="match status" value="1"/>
</dbReference>
<dbReference type="PANTHER" id="PTHR30194:SF3">
    <property type="entry name" value="CROSSOVER JUNCTION ENDODEOXYRIBONUCLEASE RUVC"/>
    <property type="match status" value="1"/>
</dbReference>
<dbReference type="Pfam" id="PF02075">
    <property type="entry name" value="RuvC"/>
    <property type="match status" value="1"/>
</dbReference>
<dbReference type="PRINTS" id="PR00696">
    <property type="entry name" value="RSOLVASERUVC"/>
</dbReference>
<dbReference type="SUPFAM" id="SSF53098">
    <property type="entry name" value="Ribonuclease H-like"/>
    <property type="match status" value="1"/>
</dbReference>
<dbReference type="PROSITE" id="PS01321">
    <property type="entry name" value="RUVC"/>
    <property type="match status" value="1"/>
</dbReference>
<name>RUVC_HELP2</name>
<evidence type="ECO:0000255" key="1">
    <source>
        <dbReference type="HAMAP-Rule" id="MF_00034"/>
    </source>
</evidence>
<protein>
    <recommendedName>
        <fullName evidence="1">Crossover junction endodeoxyribonuclease RuvC</fullName>
        <ecNumber evidence="1">3.1.21.10</ecNumber>
    </recommendedName>
    <alternativeName>
        <fullName evidence="1">Holliday junction nuclease RuvC</fullName>
    </alternativeName>
    <alternativeName>
        <fullName evidence="1">Holliday junction resolvase RuvC</fullName>
    </alternativeName>
</protein>
<gene>
    <name evidence="1" type="primary">ruvC</name>
    <name type="ordered locus">HPP12_0877</name>
</gene>
<sequence>MRILGIDPGSRKCGYAIISHTSNKLSLITAGFINITTTRLQEQILDLIEALDCLLDRYEVHEVAIEDIFFAYNPKSVIKLAQFRGALSLKILERIGNFSEYTPLQVKKALTGNGKAAKEQVAFMVKRLLNITSEIKPLDISDAIAVAITHAQRLKLH</sequence>
<accession>B6JMA1</accession>